<keyword id="KW-0325">Glycoprotein</keyword>
<keyword id="KW-0333">Golgi apparatus</keyword>
<keyword id="KW-0472">Membrane</keyword>
<keyword id="KW-0653">Protein transport</keyword>
<keyword id="KW-0675">Receptor</keyword>
<keyword id="KW-1185">Reference proteome</keyword>
<keyword id="KW-0677">Repeat</keyword>
<keyword id="KW-0732">Signal</keyword>
<keyword id="KW-0812">Transmembrane</keyword>
<keyword id="KW-1133">Transmembrane helix</keyword>
<keyword id="KW-0813">Transport</keyword>
<protein>
    <recommendedName>
        <fullName>Vacuolar protein sorting/targeting protein 10</fullName>
    </recommendedName>
    <alternativeName>
        <fullName>Carboxypeptidase Y receptor</fullName>
        <shortName>CPY receptor</shortName>
    </alternativeName>
    <alternativeName>
        <fullName>Sortilin vps10</fullName>
    </alternativeName>
    <alternativeName>
        <fullName>Vacuolar carboxypeptidase sorting receptor vps10</fullName>
    </alternativeName>
</protein>
<reference key="1">
    <citation type="journal article" date="2015" name="Genome Announc.">
        <title>Genome sequence of the AIDS-associated pathogen Penicillium marneffei (ATCC18224) and its near taxonomic relative Talaromyces stipitatus (ATCC10500).</title>
        <authorList>
            <person name="Nierman W.C."/>
            <person name="Fedorova-Abrams N.D."/>
            <person name="Andrianopoulos A."/>
        </authorList>
    </citation>
    <scope>NUCLEOTIDE SEQUENCE [LARGE SCALE GENOMIC DNA]</scope>
    <source>
        <strain>ATCC 10500 / CBS 375.48 / QM 6759 / NRRL 1006</strain>
    </source>
</reference>
<feature type="signal peptide" evidence="2">
    <location>
        <begin position="1"/>
        <end position="29"/>
    </location>
</feature>
<feature type="chain" id="PRO_0000407537" description="Vacuolar protein sorting/targeting protein 10">
    <location>
        <begin position="30"/>
        <end position="1502"/>
    </location>
</feature>
<feature type="topological domain" description="Lumenal" evidence="2">
    <location>
        <begin position="30"/>
        <end position="1369"/>
    </location>
</feature>
<feature type="transmembrane region" description="Helical" evidence="2">
    <location>
        <begin position="1370"/>
        <end position="1390"/>
    </location>
</feature>
<feature type="topological domain" description="Cytoplasmic" evidence="2">
    <location>
        <begin position="1391"/>
        <end position="1422"/>
    </location>
</feature>
<feature type="transmembrane region" description="Helical" evidence="2">
    <location>
        <begin position="1423"/>
        <end position="1443"/>
    </location>
</feature>
<feature type="topological domain" description="Lumenal" evidence="2">
    <location>
        <begin position="1444"/>
        <end position="1502"/>
    </location>
</feature>
<feature type="repeat" description="BNR 1">
    <location>
        <begin position="68"/>
        <end position="78"/>
    </location>
</feature>
<feature type="repeat" description="BNR 2">
    <location>
        <begin position="120"/>
        <end position="130"/>
    </location>
</feature>
<feature type="repeat" description="BNR 3">
    <location>
        <begin position="395"/>
        <end position="404"/>
    </location>
</feature>
<feature type="repeat" description="BNR 4">
    <location>
        <begin position="456"/>
        <end position="466"/>
    </location>
</feature>
<feature type="repeat" description="BNR 5">
    <location>
        <begin position="498"/>
        <end position="508"/>
    </location>
</feature>
<feature type="repeat" description="BNR 6">
    <location>
        <begin position="740"/>
        <end position="750"/>
    </location>
</feature>
<feature type="repeat" description="BNR 7">
    <location>
        <begin position="1119"/>
        <end position="1129"/>
    </location>
</feature>
<feature type="repeat" description="BNR 8">
    <location>
        <begin position="1160"/>
        <end position="1171"/>
    </location>
</feature>
<feature type="glycosylation site" description="N-linked (GlcNAc...) asparagine" evidence="2">
    <location>
        <position position="314"/>
    </location>
</feature>
<feature type="glycosylation site" description="N-linked (GlcNAc...) asparagine" evidence="2">
    <location>
        <position position="339"/>
    </location>
</feature>
<feature type="glycosylation site" description="N-linked (GlcNAc...) asparagine" evidence="2">
    <location>
        <position position="985"/>
    </location>
</feature>
<feature type="glycosylation site" description="N-linked (GlcNAc...) asparagine" evidence="2">
    <location>
        <position position="1280"/>
    </location>
</feature>
<accession>B8MG72</accession>
<comment type="function">
    <text evidence="1">Functions as a sorting receptor in the Golgi compartment required for the intracellular sorting and delivery of soluble vacuolar proteins, like carboxypeptidase Y (CPY) and proteinase A. Executes multiple rounds of sorting by cycling between the late Golgi and a prevacuolar endosome-like compartment (By similarity).</text>
</comment>
<comment type="subcellular location">
    <subcellularLocation>
        <location evidence="1">Golgi apparatus</location>
        <location evidence="1">trans-Golgi network membrane</location>
        <topology evidence="1">Multi-pass membrane protein</topology>
    </subcellularLocation>
    <subcellularLocation>
        <location evidence="1">Prevacuolar compartment membrane</location>
        <topology evidence="1">Multi-pass membrane protein</topology>
    </subcellularLocation>
    <text evidence="1">Cycles between the Golgi apparatus and the prevacuolar compartment.</text>
</comment>
<comment type="similarity">
    <text evidence="3">Belongs to the VPS10-related sortilin family.</text>
</comment>
<proteinExistence type="inferred from homology"/>
<evidence type="ECO:0000250" key="1"/>
<evidence type="ECO:0000255" key="2"/>
<evidence type="ECO:0000305" key="3"/>
<dbReference type="EMBL" id="EQ962656">
    <property type="protein sequence ID" value="EED15939.1"/>
    <property type="molecule type" value="Genomic_DNA"/>
</dbReference>
<dbReference type="RefSeq" id="XP_002483173.1">
    <property type="nucleotide sequence ID" value="XM_002483128.1"/>
</dbReference>
<dbReference type="SMR" id="B8MG72"/>
<dbReference type="FunCoup" id="B8MG72">
    <property type="interactions" value="203"/>
</dbReference>
<dbReference type="STRING" id="441959.B8MG72"/>
<dbReference type="GlyCosmos" id="B8MG72">
    <property type="glycosylation" value="4 sites, No reported glycans"/>
</dbReference>
<dbReference type="GeneID" id="8109829"/>
<dbReference type="VEuPathDB" id="FungiDB:TSTA_010560"/>
<dbReference type="eggNOG" id="KOG3511">
    <property type="taxonomic scope" value="Eukaryota"/>
</dbReference>
<dbReference type="HOGENOM" id="CLU_000700_0_0_1"/>
<dbReference type="InParanoid" id="B8MG72"/>
<dbReference type="OMA" id="ATMSEFI"/>
<dbReference type="OrthoDB" id="443634at2759"/>
<dbReference type="PhylomeDB" id="B8MG72"/>
<dbReference type="Proteomes" id="UP000001745">
    <property type="component" value="Unassembled WGS sequence"/>
</dbReference>
<dbReference type="GO" id="GO:0005829">
    <property type="term" value="C:cytosol"/>
    <property type="evidence" value="ECO:0007669"/>
    <property type="project" value="GOC"/>
</dbReference>
<dbReference type="GO" id="GO:0005794">
    <property type="term" value="C:Golgi apparatus"/>
    <property type="evidence" value="ECO:0007669"/>
    <property type="project" value="UniProtKB-SubCell"/>
</dbReference>
<dbReference type="GO" id="GO:0016020">
    <property type="term" value="C:membrane"/>
    <property type="evidence" value="ECO:0007669"/>
    <property type="project" value="UniProtKB-KW"/>
</dbReference>
<dbReference type="GO" id="GO:0006895">
    <property type="term" value="P:Golgi to endosome transport"/>
    <property type="evidence" value="ECO:0007669"/>
    <property type="project" value="TreeGrafter"/>
</dbReference>
<dbReference type="GO" id="GO:0006896">
    <property type="term" value="P:Golgi to vacuole transport"/>
    <property type="evidence" value="ECO:0007669"/>
    <property type="project" value="TreeGrafter"/>
</dbReference>
<dbReference type="GO" id="GO:0006623">
    <property type="term" value="P:protein targeting to vacuole"/>
    <property type="evidence" value="ECO:0007669"/>
    <property type="project" value="TreeGrafter"/>
</dbReference>
<dbReference type="CDD" id="cd15482">
    <property type="entry name" value="Sialidase_non-viral"/>
    <property type="match status" value="2"/>
</dbReference>
<dbReference type="FunFam" id="3.30.60.270:FF:000005">
    <property type="entry name" value="Sortilin"/>
    <property type="match status" value="2"/>
</dbReference>
<dbReference type="Gene3D" id="2.10.70.80">
    <property type="match status" value="2"/>
</dbReference>
<dbReference type="Gene3D" id="3.30.60.270">
    <property type="match status" value="2"/>
</dbReference>
<dbReference type="Gene3D" id="2.130.10.10">
    <property type="entry name" value="YVTN repeat-like/Quinoprotein amine dehydrogenase"/>
    <property type="match status" value="1"/>
</dbReference>
<dbReference type="InterPro" id="IPR031777">
    <property type="entry name" value="Sortilin_C"/>
</dbReference>
<dbReference type="InterPro" id="IPR031778">
    <property type="entry name" value="Sortilin_N"/>
</dbReference>
<dbReference type="InterPro" id="IPR006581">
    <property type="entry name" value="VPS10"/>
</dbReference>
<dbReference type="InterPro" id="IPR050310">
    <property type="entry name" value="VPS10-sortilin"/>
</dbReference>
<dbReference type="InterPro" id="IPR015943">
    <property type="entry name" value="WD40/YVTN_repeat-like_dom_sf"/>
</dbReference>
<dbReference type="PANTHER" id="PTHR12106">
    <property type="entry name" value="SORTILIN RELATED"/>
    <property type="match status" value="1"/>
</dbReference>
<dbReference type="PANTHER" id="PTHR12106:SF27">
    <property type="entry name" value="SORTILIN-RELATED RECEPTOR"/>
    <property type="match status" value="1"/>
</dbReference>
<dbReference type="Pfam" id="PF15902">
    <property type="entry name" value="Sortilin-Vps10"/>
    <property type="match status" value="2"/>
</dbReference>
<dbReference type="Pfam" id="PF15901">
    <property type="entry name" value="Sortilin_C"/>
    <property type="match status" value="2"/>
</dbReference>
<dbReference type="SMART" id="SM00602">
    <property type="entry name" value="VPS10"/>
    <property type="match status" value="2"/>
</dbReference>
<dbReference type="SUPFAM" id="SSF110296">
    <property type="entry name" value="Oligoxyloglucan reducing end-specific cellobiohydrolase"/>
    <property type="match status" value="2"/>
</dbReference>
<name>VPS10_TALSN</name>
<sequence>MIRQCLHLTTSPLLLLLLIALSSIGTVVAKSDGPKIASIQLETEPSMPFYFENSDTVLFLRLDTGEVYQSFDGGVEWKVLGKDHETEGETAGLANGAVMIQAHPYDNQKAYILGRHGVHWVTTDQGKTWREFEVPAAPSMFNEPLRFHGEDSGKVIFQGERCSAFACVETSYYTRNNFETVKPMRDTARGCMWAVATPGFADSTTEHAEEIRDRVLCIVHGLKNPFASAYRLVYSDSFFEDDQDGIEAKLNEGRPVAGIINAAARTKYIVAAAKSQGTDELAMFVTDDAITWHRAEFGNHKIEESAYTVLEGTNYSIEVDVMNTDRSTNMGVLFTSNSNGTYFTRNIEHTNRDMSGLVDFEKIAGVQGIVLVNVVDNWEEIENDPKADRKVISKISFDDGRTFQSLKVKDKDLHLHSVTAFENIGRVFSSPAPGIVMGVGNTGTHLKSYTKDGDLYVSDDAGVTWRLALEKPHKYEIGNKGAIIMAIKDNDKPTKKIQYSINHGKDWETAELDREIIPYFLTTTPDSTSLKFMLVGYVEDPADWYIYAIDFEGLHERECKDSDFENWPARLDENGEPDCLMGHKQFYRRRKSDANCFITETMFKTPKPEFKSCKCTAEDFECDYNFVRSEDRKECVPATILKAPEGTCKNDDDTFKGPSGWRLIPGNVCTRDGAVELDKEIDRPCKDALKTPSGDSKAVSSTANYIETEMFGEFFYLERAGSSRGEDETIIMRTTDGKLYVTHDHGKSWTHELKDVKIQQIAPHRYLNDRAFFLTSGKKQYYTINRAESFDAFSAPAEVNPSGLTLGYHEEFKDWMIWTGPGECSHGECPKVSFISKHRGDDWEILLRAVEKCEFMAREDRKDSGSLIFCDQHEGEKVDGQRMLVTSNDFFATSTTPLTNIIDFATMAEFIIIATRNPEKENSLKVDASVNGVEFADAEFPYNLEVPVQLAYTVLDSSTHSVFLHVTANNKMDQSYGSIIKSNSNGTSYVLSLNDVNRNNGGYVDFEKLPGLEGVALANVVSNTKNVEKGSEKKLTSMITHNDGSQWTLIPPPAKDSEGKPYSCGSDGKPTDKCSLHLHGYTERRDPRDSFGSASAIGLLFGVGNVGESLGSKSEASTFFSSDGGISWKEVKKGNYMWKFGDQGSVLVLVEELKPTRDIYFSTDEGDTWEKYQFSEKEVTVQSLSTVPSGTSKNFLIWGKETGSSKLVTINLDFSGLRDRTCNLDEDTGESEDYYLWEPKHPLQEGNCLFGHVEQYHRKKPSSHCWNDWSEAHVHRISHNCTCTEEDYECDYNYERQTDGSCALVPGLLKPNAIDYCRENPEAIEYWEPTGYRRIPLTTCQGGKNLDRWVSRPCPSHEEEYQRKHGPSGAVIFFAIIVPITIAVAAGYWVYTRWDGKFGQIRLGDGGAQSFVTSRGDSPFITIPVAIIAGTVAAVKVLPLLVMSLWRSVTGYVRIPGRRGPRPYATRDAFAARRGDYTHVVDDEDELLGDDEFEDEEGDERN</sequence>
<organism>
    <name type="scientific">Talaromyces stipitatus (strain ATCC 10500 / CBS 375.48 / QM 6759 / NRRL 1006)</name>
    <name type="common">Penicillium stipitatum</name>
    <dbReference type="NCBI Taxonomy" id="441959"/>
    <lineage>
        <taxon>Eukaryota</taxon>
        <taxon>Fungi</taxon>
        <taxon>Dikarya</taxon>
        <taxon>Ascomycota</taxon>
        <taxon>Pezizomycotina</taxon>
        <taxon>Eurotiomycetes</taxon>
        <taxon>Eurotiomycetidae</taxon>
        <taxon>Eurotiales</taxon>
        <taxon>Trichocomaceae</taxon>
        <taxon>Talaromyces</taxon>
        <taxon>Talaromyces sect. Talaromyces</taxon>
    </lineage>
</organism>
<gene>
    <name type="primary">vps10</name>
    <name type="ORF">TSTA_010560</name>
</gene>